<gene>
    <name evidence="1" type="primary">rbsD</name>
    <name type="ordered locus">BA_0666</name>
    <name type="ordered locus">GBAA_0666</name>
    <name type="ordered locus">BAS0633</name>
</gene>
<proteinExistence type="inferred from homology"/>
<dbReference type="EC" id="5.4.99.62" evidence="1"/>
<dbReference type="EMBL" id="AE016879">
    <property type="protein sequence ID" value="AAP24680.1"/>
    <property type="molecule type" value="Genomic_DNA"/>
</dbReference>
<dbReference type="EMBL" id="AE017334">
    <property type="protein sequence ID" value="AAT29771.1"/>
    <property type="molecule type" value="Genomic_DNA"/>
</dbReference>
<dbReference type="EMBL" id="AE017225">
    <property type="protein sequence ID" value="AAT52961.1"/>
    <property type="molecule type" value="Genomic_DNA"/>
</dbReference>
<dbReference type="RefSeq" id="NP_843194.1">
    <property type="nucleotide sequence ID" value="NC_003997.3"/>
</dbReference>
<dbReference type="RefSeq" id="WP_000716140.1">
    <property type="nucleotide sequence ID" value="NZ_WXXJ01000017.1"/>
</dbReference>
<dbReference type="RefSeq" id="YP_026910.1">
    <property type="nucleotide sequence ID" value="NC_005945.1"/>
</dbReference>
<dbReference type="SMR" id="Q81V37"/>
<dbReference type="IntAct" id="Q81V37">
    <property type="interactions" value="1"/>
</dbReference>
<dbReference type="STRING" id="261594.GBAA_0666"/>
<dbReference type="DNASU" id="1088780"/>
<dbReference type="GeneID" id="45020726"/>
<dbReference type="KEGG" id="ban:BA_0666"/>
<dbReference type="KEGG" id="banh:HYU01_03595"/>
<dbReference type="KEGG" id="bar:GBAA_0666"/>
<dbReference type="KEGG" id="bat:BAS0633"/>
<dbReference type="PATRIC" id="fig|198094.11.peg.666"/>
<dbReference type="eggNOG" id="COG1869">
    <property type="taxonomic scope" value="Bacteria"/>
</dbReference>
<dbReference type="HOGENOM" id="CLU_135498_0_0_9"/>
<dbReference type="OMA" id="EQTPYAN"/>
<dbReference type="OrthoDB" id="9805009at2"/>
<dbReference type="UniPathway" id="UPA00916">
    <property type="reaction ID" value="UER00888"/>
</dbReference>
<dbReference type="Proteomes" id="UP000000427">
    <property type="component" value="Chromosome"/>
</dbReference>
<dbReference type="Proteomes" id="UP000000594">
    <property type="component" value="Chromosome"/>
</dbReference>
<dbReference type="GO" id="GO:0005829">
    <property type="term" value="C:cytosol"/>
    <property type="evidence" value="ECO:0007669"/>
    <property type="project" value="TreeGrafter"/>
</dbReference>
<dbReference type="GO" id="GO:0062193">
    <property type="term" value="F:D-ribose pyranase activity"/>
    <property type="evidence" value="ECO:0007669"/>
    <property type="project" value="UniProtKB-EC"/>
</dbReference>
<dbReference type="GO" id="GO:0016872">
    <property type="term" value="F:intramolecular lyase activity"/>
    <property type="evidence" value="ECO:0007669"/>
    <property type="project" value="UniProtKB-UniRule"/>
</dbReference>
<dbReference type="GO" id="GO:0048029">
    <property type="term" value="F:monosaccharide binding"/>
    <property type="evidence" value="ECO:0007669"/>
    <property type="project" value="InterPro"/>
</dbReference>
<dbReference type="GO" id="GO:0019303">
    <property type="term" value="P:D-ribose catabolic process"/>
    <property type="evidence" value="ECO:0007669"/>
    <property type="project" value="UniProtKB-UniRule"/>
</dbReference>
<dbReference type="FunFam" id="3.40.1650.10:FF:000003">
    <property type="entry name" value="D-ribose pyranase"/>
    <property type="match status" value="1"/>
</dbReference>
<dbReference type="Gene3D" id="3.40.1650.10">
    <property type="entry name" value="RbsD-like domain"/>
    <property type="match status" value="1"/>
</dbReference>
<dbReference type="HAMAP" id="MF_01661">
    <property type="entry name" value="D_rib_pyranase"/>
    <property type="match status" value="1"/>
</dbReference>
<dbReference type="InterPro" id="IPR023064">
    <property type="entry name" value="D-ribose_pyranase"/>
</dbReference>
<dbReference type="InterPro" id="IPR023750">
    <property type="entry name" value="RbsD-like_sf"/>
</dbReference>
<dbReference type="InterPro" id="IPR007721">
    <property type="entry name" value="RbsD_FucU"/>
</dbReference>
<dbReference type="NCBIfam" id="NF008761">
    <property type="entry name" value="PRK11797.1"/>
    <property type="match status" value="1"/>
</dbReference>
<dbReference type="PANTHER" id="PTHR37831">
    <property type="entry name" value="D-RIBOSE PYRANASE"/>
    <property type="match status" value="1"/>
</dbReference>
<dbReference type="PANTHER" id="PTHR37831:SF1">
    <property type="entry name" value="D-RIBOSE PYRANASE"/>
    <property type="match status" value="1"/>
</dbReference>
<dbReference type="Pfam" id="PF05025">
    <property type="entry name" value="RbsD_FucU"/>
    <property type="match status" value="1"/>
</dbReference>
<dbReference type="SUPFAM" id="SSF102546">
    <property type="entry name" value="RbsD-like"/>
    <property type="match status" value="1"/>
</dbReference>
<reference key="1">
    <citation type="journal article" date="2003" name="Nature">
        <title>The genome sequence of Bacillus anthracis Ames and comparison to closely related bacteria.</title>
        <authorList>
            <person name="Read T.D."/>
            <person name="Peterson S.N."/>
            <person name="Tourasse N.J."/>
            <person name="Baillie L.W."/>
            <person name="Paulsen I.T."/>
            <person name="Nelson K.E."/>
            <person name="Tettelin H."/>
            <person name="Fouts D.E."/>
            <person name="Eisen J.A."/>
            <person name="Gill S.R."/>
            <person name="Holtzapple E.K."/>
            <person name="Okstad O.A."/>
            <person name="Helgason E."/>
            <person name="Rilstone J."/>
            <person name="Wu M."/>
            <person name="Kolonay J.F."/>
            <person name="Beanan M.J."/>
            <person name="Dodson R.J."/>
            <person name="Brinkac L.M."/>
            <person name="Gwinn M.L."/>
            <person name="DeBoy R.T."/>
            <person name="Madpu R."/>
            <person name="Daugherty S.C."/>
            <person name="Durkin A.S."/>
            <person name="Haft D.H."/>
            <person name="Nelson W.C."/>
            <person name="Peterson J.D."/>
            <person name="Pop M."/>
            <person name="Khouri H.M."/>
            <person name="Radune D."/>
            <person name="Benton J.L."/>
            <person name="Mahamoud Y."/>
            <person name="Jiang L."/>
            <person name="Hance I.R."/>
            <person name="Weidman J.F."/>
            <person name="Berry K.J."/>
            <person name="Plaut R.D."/>
            <person name="Wolf A.M."/>
            <person name="Watkins K.L."/>
            <person name="Nierman W.C."/>
            <person name="Hazen A."/>
            <person name="Cline R.T."/>
            <person name="Redmond C."/>
            <person name="Thwaite J.E."/>
            <person name="White O."/>
            <person name="Salzberg S.L."/>
            <person name="Thomason B."/>
            <person name="Friedlander A.M."/>
            <person name="Koehler T.M."/>
            <person name="Hanna P.C."/>
            <person name="Kolstoe A.-B."/>
            <person name="Fraser C.M."/>
        </authorList>
    </citation>
    <scope>NUCLEOTIDE SEQUENCE [LARGE SCALE GENOMIC DNA]</scope>
    <source>
        <strain>Ames / isolate Porton</strain>
    </source>
</reference>
<reference key="2">
    <citation type="submission" date="2004-01" db="EMBL/GenBank/DDBJ databases">
        <title>Complete genome sequence of Bacillus anthracis Sterne.</title>
        <authorList>
            <person name="Brettin T.S."/>
            <person name="Bruce D."/>
            <person name="Challacombe J.F."/>
            <person name="Gilna P."/>
            <person name="Han C."/>
            <person name="Hill K."/>
            <person name="Hitchcock P."/>
            <person name="Jackson P."/>
            <person name="Keim P."/>
            <person name="Longmire J."/>
            <person name="Lucas S."/>
            <person name="Okinaka R."/>
            <person name="Richardson P."/>
            <person name="Rubin E."/>
            <person name="Tice H."/>
        </authorList>
    </citation>
    <scope>NUCLEOTIDE SEQUENCE [LARGE SCALE GENOMIC DNA]</scope>
    <source>
        <strain>Sterne</strain>
    </source>
</reference>
<reference key="3">
    <citation type="journal article" date="2009" name="J. Bacteriol.">
        <title>The complete genome sequence of Bacillus anthracis Ames 'Ancestor'.</title>
        <authorList>
            <person name="Ravel J."/>
            <person name="Jiang L."/>
            <person name="Stanley S.T."/>
            <person name="Wilson M.R."/>
            <person name="Decker R.S."/>
            <person name="Read T.D."/>
            <person name="Worsham P."/>
            <person name="Keim P.S."/>
            <person name="Salzberg S.L."/>
            <person name="Fraser-Liggett C.M."/>
            <person name="Rasko D.A."/>
        </authorList>
    </citation>
    <scope>NUCLEOTIDE SEQUENCE [LARGE SCALE GENOMIC DNA]</scope>
    <source>
        <strain>Ames ancestor</strain>
    </source>
</reference>
<feature type="chain" id="PRO_0000346170" description="D-ribose pyranase">
    <location>
        <begin position="1"/>
        <end position="131"/>
    </location>
</feature>
<feature type="active site" description="Proton donor" evidence="1">
    <location>
        <position position="20"/>
    </location>
</feature>
<feature type="binding site" evidence="1">
    <location>
        <position position="28"/>
    </location>
    <ligand>
        <name>substrate</name>
    </ligand>
</feature>
<feature type="binding site" evidence="1">
    <location>
        <position position="98"/>
    </location>
    <ligand>
        <name>substrate</name>
    </ligand>
</feature>
<feature type="binding site" evidence="1">
    <location>
        <begin position="120"/>
        <end position="122"/>
    </location>
    <ligand>
        <name>substrate</name>
    </ligand>
</feature>
<protein>
    <recommendedName>
        <fullName evidence="1">D-ribose pyranase</fullName>
        <ecNumber evidence="1">5.4.99.62</ecNumber>
    </recommendedName>
</protein>
<keyword id="KW-0119">Carbohydrate metabolism</keyword>
<keyword id="KW-0963">Cytoplasm</keyword>
<keyword id="KW-0413">Isomerase</keyword>
<keyword id="KW-1185">Reference proteome</keyword>
<organism>
    <name type="scientific">Bacillus anthracis</name>
    <dbReference type="NCBI Taxonomy" id="1392"/>
    <lineage>
        <taxon>Bacteria</taxon>
        <taxon>Bacillati</taxon>
        <taxon>Bacillota</taxon>
        <taxon>Bacilli</taxon>
        <taxon>Bacillales</taxon>
        <taxon>Bacillaceae</taxon>
        <taxon>Bacillus</taxon>
        <taxon>Bacillus cereus group</taxon>
    </lineage>
</organism>
<accession>Q81V37</accession>
<accession>Q6I3C0</accession>
<accession>Q6KX37</accession>
<sequence>MKKHGVLNSEIAAVLASLGHTDTIVIADCGLPIPDGVKRIDLAVEIGKPSFLDVLQVVADDMAIEKVTLAEEVINNNAEVNKEIELKLIEPAFEYVCHEQFKEHTKKAKAIIRTGEATPYANVILHAGVIF</sequence>
<name>RBSD_BACAN</name>
<comment type="function">
    <text evidence="1">Catalyzes the interconversion of beta-pyran and beta-furan forms of D-ribose.</text>
</comment>
<comment type="catalytic activity">
    <reaction evidence="1">
        <text>beta-D-ribopyranose = beta-D-ribofuranose</text>
        <dbReference type="Rhea" id="RHEA:25432"/>
        <dbReference type="ChEBI" id="CHEBI:27476"/>
        <dbReference type="ChEBI" id="CHEBI:47002"/>
        <dbReference type="EC" id="5.4.99.62"/>
    </reaction>
</comment>
<comment type="pathway">
    <text evidence="1">Carbohydrate metabolism; D-ribose degradation; D-ribose 5-phosphate from beta-D-ribopyranose: step 1/2.</text>
</comment>
<comment type="subunit">
    <text evidence="1">Homodecamer.</text>
</comment>
<comment type="subcellular location">
    <subcellularLocation>
        <location evidence="1">Cytoplasm</location>
    </subcellularLocation>
</comment>
<comment type="similarity">
    <text evidence="1">Belongs to the RbsD / FucU family. RbsD subfamily.</text>
</comment>
<evidence type="ECO:0000255" key="1">
    <source>
        <dbReference type="HAMAP-Rule" id="MF_01661"/>
    </source>
</evidence>